<evidence type="ECO:0000255" key="1">
    <source>
        <dbReference type="HAMAP-Rule" id="MF_00382"/>
    </source>
</evidence>
<evidence type="ECO:0000305" key="2"/>
<sequence>MPRVKRGVTARARHKKIINLAKGYRGRRNNVYRIAKQAVMRAGQYAYRDRRNKKRVFRALWITRINAAVRQHDMTYSVFINGLKKASIELDRKVLADMAVFDKAAFAAIVKQVKAAVAA</sequence>
<protein>
    <recommendedName>
        <fullName evidence="1">Large ribosomal subunit protein bL20</fullName>
    </recommendedName>
    <alternativeName>
        <fullName evidence="2">50S ribosomal protein L20</fullName>
    </alternativeName>
</protein>
<organism>
    <name type="scientific">Burkholderia mallei (strain NCTC 10229)</name>
    <dbReference type="NCBI Taxonomy" id="412022"/>
    <lineage>
        <taxon>Bacteria</taxon>
        <taxon>Pseudomonadati</taxon>
        <taxon>Pseudomonadota</taxon>
        <taxon>Betaproteobacteria</taxon>
        <taxon>Burkholderiales</taxon>
        <taxon>Burkholderiaceae</taxon>
        <taxon>Burkholderia</taxon>
        <taxon>pseudomallei group</taxon>
    </lineage>
</organism>
<dbReference type="EMBL" id="CP000546">
    <property type="protein sequence ID" value="ABN00864.1"/>
    <property type="molecule type" value="Genomic_DNA"/>
</dbReference>
<dbReference type="RefSeq" id="WP_004192938.1">
    <property type="nucleotide sequence ID" value="NC_008836.1"/>
</dbReference>
<dbReference type="SMR" id="A2S2N4"/>
<dbReference type="GeneID" id="98102114"/>
<dbReference type="KEGG" id="bml:BMA10229_A0200"/>
<dbReference type="HOGENOM" id="CLU_123265_0_1_4"/>
<dbReference type="Proteomes" id="UP000002283">
    <property type="component" value="Chromosome I"/>
</dbReference>
<dbReference type="GO" id="GO:1990904">
    <property type="term" value="C:ribonucleoprotein complex"/>
    <property type="evidence" value="ECO:0007669"/>
    <property type="project" value="UniProtKB-KW"/>
</dbReference>
<dbReference type="GO" id="GO:0005840">
    <property type="term" value="C:ribosome"/>
    <property type="evidence" value="ECO:0007669"/>
    <property type="project" value="UniProtKB-KW"/>
</dbReference>
<dbReference type="GO" id="GO:0019843">
    <property type="term" value="F:rRNA binding"/>
    <property type="evidence" value="ECO:0007669"/>
    <property type="project" value="UniProtKB-UniRule"/>
</dbReference>
<dbReference type="GO" id="GO:0003735">
    <property type="term" value="F:structural constituent of ribosome"/>
    <property type="evidence" value="ECO:0007669"/>
    <property type="project" value="InterPro"/>
</dbReference>
<dbReference type="GO" id="GO:0000027">
    <property type="term" value="P:ribosomal large subunit assembly"/>
    <property type="evidence" value="ECO:0007669"/>
    <property type="project" value="UniProtKB-UniRule"/>
</dbReference>
<dbReference type="GO" id="GO:0006412">
    <property type="term" value="P:translation"/>
    <property type="evidence" value="ECO:0007669"/>
    <property type="project" value="InterPro"/>
</dbReference>
<dbReference type="CDD" id="cd07026">
    <property type="entry name" value="Ribosomal_L20"/>
    <property type="match status" value="1"/>
</dbReference>
<dbReference type="FunFam" id="1.10.1900.20:FF:000001">
    <property type="entry name" value="50S ribosomal protein L20"/>
    <property type="match status" value="1"/>
</dbReference>
<dbReference type="Gene3D" id="6.10.160.10">
    <property type="match status" value="1"/>
</dbReference>
<dbReference type="Gene3D" id="1.10.1900.20">
    <property type="entry name" value="Ribosomal protein L20"/>
    <property type="match status" value="1"/>
</dbReference>
<dbReference type="HAMAP" id="MF_00382">
    <property type="entry name" value="Ribosomal_bL20"/>
    <property type="match status" value="1"/>
</dbReference>
<dbReference type="InterPro" id="IPR005813">
    <property type="entry name" value="Ribosomal_bL20"/>
</dbReference>
<dbReference type="InterPro" id="IPR049946">
    <property type="entry name" value="RIBOSOMAL_L20_CS"/>
</dbReference>
<dbReference type="InterPro" id="IPR035566">
    <property type="entry name" value="Ribosomal_protein_bL20_C"/>
</dbReference>
<dbReference type="NCBIfam" id="TIGR01032">
    <property type="entry name" value="rplT_bact"/>
    <property type="match status" value="1"/>
</dbReference>
<dbReference type="PANTHER" id="PTHR10986">
    <property type="entry name" value="39S RIBOSOMAL PROTEIN L20"/>
    <property type="match status" value="1"/>
</dbReference>
<dbReference type="Pfam" id="PF00453">
    <property type="entry name" value="Ribosomal_L20"/>
    <property type="match status" value="1"/>
</dbReference>
<dbReference type="PRINTS" id="PR00062">
    <property type="entry name" value="RIBOSOMALL20"/>
</dbReference>
<dbReference type="SUPFAM" id="SSF74731">
    <property type="entry name" value="Ribosomal protein L20"/>
    <property type="match status" value="1"/>
</dbReference>
<dbReference type="PROSITE" id="PS00937">
    <property type="entry name" value="RIBOSOMAL_L20"/>
    <property type="match status" value="1"/>
</dbReference>
<keyword id="KW-0687">Ribonucleoprotein</keyword>
<keyword id="KW-0689">Ribosomal protein</keyword>
<keyword id="KW-0694">RNA-binding</keyword>
<keyword id="KW-0699">rRNA-binding</keyword>
<accession>A2S2N4</accession>
<reference key="1">
    <citation type="journal article" date="2010" name="Genome Biol. Evol.">
        <title>Continuing evolution of Burkholderia mallei through genome reduction and large-scale rearrangements.</title>
        <authorList>
            <person name="Losada L."/>
            <person name="Ronning C.M."/>
            <person name="DeShazer D."/>
            <person name="Woods D."/>
            <person name="Fedorova N."/>
            <person name="Kim H.S."/>
            <person name="Shabalina S.A."/>
            <person name="Pearson T.R."/>
            <person name="Brinkac L."/>
            <person name="Tan P."/>
            <person name="Nandi T."/>
            <person name="Crabtree J."/>
            <person name="Badger J."/>
            <person name="Beckstrom-Sternberg S."/>
            <person name="Saqib M."/>
            <person name="Schutzer S.E."/>
            <person name="Keim P."/>
            <person name="Nierman W.C."/>
        </authorList>
    </citation>
    <scope>NUCLEOTIDE SEQUENCE [LARGE SCALE GENOMIC DNA]</scope>
    <source>
        <strain>NCTC 10229</strain>
    </source>
</reference>
<name>RL20_BURM9</name>
<proteinExistence type="inferred from homology"/>
<comment type="function">
    <text evidence="1">Binds directly to 23S ribosomal RNA and is necessary for the in vitro assembly process of the 50S ribosomal subunit. It is not involved in the protein synthesizing functions of that subunit.</text>
</comment>
<comment type="similarity">
    <text evidence="1">Belongs to the bacterial ribosomal protein bL20 family.</text>
</comment>
<feature type="chain" id="PRO_1000048940" description="Large ribosomal subunit protein bL20">
    <location>
        <begin position="1"/>
        <end position="119"/>
    </location>
</feature>
<gene>
    <name evidence="1" type="primary">rplT</name>
    <name type="ordered locus">BMA10229_A0200</name>
</gene>